<protein>
    <recommendedName>
        <fullName evidence="2">Virion infectivity factor</fullName>
        <shortName evidence="2">Vif</shortName>
    </recommendedName>
    <alternativeName>
        <fullName evidence="2">SOR protein</fullName>
    </alternativeName>
    <component>
        <recommendedName>
            <fullName evidence="2">p17</fullName>
        </recommendedName>
    </component>
    <component>
        <recommendedName>
            <fullName evidence="2">p7</fullName>
        </recommendedName>
    </component>
</protein>
<reference key="1">
    <citation type="journal article" date="1986" name="Cell">
        <title>Genetic variability of the AIDS virus: nucleotide sequence analysis of two isolates from African patients.</title>
        <authorList>
            <person name="Alizon M."/>
            <person name="Wain-Hobson S."/>
            <person name="Montagnier L."/>
            <person name="Sonigo P."/>
        </authorList>
    </citation>
    <scope>NUCLEOTIDE SEQUENCE [GENOMIC RNA]</scope>
</reference>
<reference key="2">
    <citation type="journal article" date="2004" name="Trends Mol. Med.">
        <title>The viral infectivity factor (Vif) of HIV-1 unveiled.</title>
        <authorList>
            <person name="Rose K.M."/>
            <person name="Marin M."/>
            <person name="Kozak S.L."/>
            <person name="Kabat D."/>
        </authorList>
    </citation>
    <scope>REVIEW</scope>
</reference>
<feature type="chain" id="PRO_0000043056" description="Virion infectivity factor" evidence="2">
    <location>
        <begin position="1"/>
        <end position="192"/>
    </location>
</feature>
<feature type="chain" id="PRO_0000043057" description="p17" evidence="2">
    <location>
        <begin position="1"/>
        <end position="150"/>
    </location>
</feature>
<feature type="chain" id="PRO_0000043058" description="p7" evidence="2">
    <location>
        <begin position="151"/>
        <end position="192"/>
    </location>
</feature>
<feature type="region of interest" description="Interaction with host APOBEC3F; F1-box" evidence="2">
    <location>
        <begin position="14"/>
        <end position="17"/>
    </location>
</feature>
<feature type="region of interest" description="Interaction with host APOBEC3G; G-box" evidence="2">
    <location>
        <begin position="40"/>
        <end position="44"/>
    </location>
</feature>
<feature type="region of interest" description="Interaction with host APOBEC3F and APOBEC3G; FG-box" evidence="2">
    <location>
        <begin position="54"/>
        <end position="72"/>
    </location>
</feature>
<feature type="region of interest" description="Interaction with host APOBEC3F; F2-box" evidence="2">
    <location>
        <begin position="74"/>
        <end position="79"/>
    </location>
</feature>
<feature type="region of interest" description="RNA-binding" evidence="2">
    <location>
        <begin position="75"/>
        <end position="114"/>
    </location>
</feature>
<feature type="region of interest" description="SOCS box-like" evidence="2">
    <location>
        <begin position="151"/>
        <end position="180"/>
    </location>
</feature>
<feature type="region of interest" description="Multimerization" evidence="2">
    <location>
        <begin position="151"/>
        <end position="164"/>
    </location>
</feature>
<feature type="region of interest" description="Disordered" evidence="3">
    <location>
        <begin position="159"/>
        <end position="192"/>
    </location>
</feature>
<feature type="region of interest" description="Membrane association" evidence="2">
    <location>
        <begin position="171"/>
        <end position="172"/>
    </location>
</feature>
<feature type="short sequence motif" description="HCCH motif" evidence="2">
    <location>
        <begin position="108"/>
        <end position="139"/>
    </location>
</feature>
<feature type="short sequence motif" description="BC-box-like motif" evidence="2">
    <location>
        <begin position="144"/>
        <end position="153"/>
    </location>
</feature>
<feature type="binding site" evidence="2">
    <location>
        <position position="108"/>
    </location>
    <ligand>
        <name>Zn(2+)</name>
        <dbReference type="ChEBI" id="CHEBI:29105"/>
    </ligand>
</feature>
<feature type="binding site" evidence="2">
    <location>
        <position position="114"/>
    </location>
    <ligand>
        <name>Zn(2+)</name>
        <dbReference type="ChEBI" id="CHEBI:29105"/>
    </ligand>
</feature>
<feature type="binding site" evidence="2">
    <location>
        <position position="133"/>
    </location>
    <ligand>
        <name>Zn(2+)</name>
        <dbReference type="ChEBI" id="CHEBI:29105"/>
    </ligand>
</feature>
<feature type="binding site" evidence="2">
    <location>
        <position position="139"/>
    </location>
    <ligand>
        <name>Zn(2+)</name>
        <dbReference type="ChEBI" id="CHEBI:29105"/>
    </ligand>
</feature>
<feature type="site" description="Cleavage in virion (by viral protease)" evidence="2">
    <location>
        <begin position="150"/>
        <end position="151"/>
    </location>
</feature>
<feature type="modified residue" description="Phosphothreonine; by host MAP4K1" evidence="2">
    <location>
        <position position="96"/>
    </location>
</feature>
<feature type="modified residue" description="Phosphoserine; by host" evidence="2">
    <location>
        <position position="144"/>
    </location>
</feature>
<feature type="modified residue" description="Phosphoserine; by host MAP4K1" evidence="2">
    <location>
        <position position="165"/>
    </location>
</feature>
<feature type="modified residue" description="Phosphothreonine; by host" evidence="2">
    <location>
        <position position="188"/>
    </location>
</feature>
<sequence length="192" mass="22723">MENRWQVMIVWQVDRMRIRTWHSLVKHHMYVSKKAKNWFYRHHYESRHPKVSSEVHIPLGDARLVVRTYWGLQTGEKDWHLGHGVSIEWRQKRYSTQLDPDLADQLIHLYYFDCFSESAIRQAILGHIVSPRCDYQAGHNKVGSLQYLALTALIAPKKTRPPLPSVRKLTEDRWNKPQQTKGHRGSHTMNGH</sequence>
<accession>P04599</accession>
<proteinExistence type="inferred from homology"/>
<name>VIF_HV1MA</name>
<gene>
    <name evidence="2" type="primary">vif</name>
</gene>
<comment type="function">
    <text evidence="2">Counteracts the innate antiviral activity of host APOBEC3F and APOBEC3G by promoting their ubiquitination and degradation. Acts as a substrate recognition component of an E3 ubiquitin-protein ligase complex: mechanistically, Vif hijacks a host cullin-5-RING E3 ubiquitin-protein ligase complex (ECS complex) and the transcription coactivator CBFB/CBF-beta to form an active E3 ubiquitin-protein ligase complex that targets APOBEC3G and APOBEC3F for polyubiquitination, leading to their degradation by the proteasome. Vif interaction with APOBEC3G also blocks its cytidine deaminase activity in a proteasome-independent manner, suggesting a dual inhibitory mechanism. May interact directly with APOBEC3G mRNA in order to inhibit its translation. Association with CBFB/CBF-beta also inhibits the transcription coactivator activity of CBFB/CBF-beta. Seems to play a role in viral morphology by affecting the stability of the viral nucleoprotein core. Finally, Vif also contributes to the G2 cell cycle arrest observed in HIV infected cells.</text>
</comment>
<comment type="subunit">
    <text evidence="1">Homomultimer; in vitro and presumably in vivo. Interacts with viral RNA and Pr55Gag precursor; these interactions mediate Vif incorporation into the virion. Interacts with the viral reverse transcriptase. Forms cullin-5-RING E3 ubiquitin-protein ligase complex (ECS complex) by interacting with host CUL5, RBX2, elongin BC complex (ELOB and ELOC) and CBFB/CBF-beta. Within the ECS complex, Vif interacts directly with host CUL5, ELOC and APOBEC (APOBEC3F and APOBEC3G) substrates. The ECS complex also contains some single-stranded RNA (ssRNA) that acts as a glue that bridges Vif with APOBEC (APOBEC3F and APOBEC3G) substrates. Interacts with host UBCE7IP1 isoform 3/ZIN and possibly with SAT. Interacts with host tyrosine kinases HCK and FYN; these interactions may decrease level of phosphorylated APOBEC3G incorporation into virions. Interacts with host ABCE1; this interaction may play a role in protecting viral RNA from damage during viral assembly. Interacts with host MDM2; this interaction targets Vif for degradation by the proteasome.</text>
</comment>
<comment type="subcellular location">
    <subcellularLocation>
        <location evidence="2">Host cytoplasm</location>
    </subcellularLocation>
    <subcellularLocation>
        <location evidence="2">Host cell membrane</location>
        <topology evidence="2">Peripheral membrane protein</topology>
        <orientation evidence="2">Cytoplasmic side</orientation>
    </subcellularLocation>
    <subcellularLocation>
        <location evidence="2">Virion</location>
    </subcellularLocation>
    <text evidence="2">In the cytoplasm, seems to colocalize with intermediate filament vimentin. A fraction is associated with the cytoplasmic side of cellular membranes, presumably via the interaction with Pr55Gag precursor. Incorporated in virions at a ratio of approximately 7 to 20 molecules per virion.</text>
</comment>
<comment type="induction">
    <text evidence="2">Expressed late during infection in a Rev-dependent manner.</text>
</comment>
<comment type="domain">
    <text evidence="2">The BC-like-box motif mediates the interaction with elongin BC complex.</text>
</comment>
<comment type="domain">
    <text evidence="2">The HCCH motif (H-x(5)-C-x(18)-C-x(5)-H) mediates the interaction with CUL5.</text>
</comment>
<comment type="PTM">
    <text evidence="2">Processed in virion by the viral protease.</text>
</comment>
<comment type="PTM">
    <text evidence="2">Highly phosphorylated on serine and threonine residues.</text>
</comment>
<comment type="PTM">
    <text evidence="2">Polyubiquitinated and degraded by the proteasome in the presence of APOBEC3G.</text>
</comment>
<comment type="miscellaneous">
    <text evidence="2">Vif-defective viruses show catastrophic failure in reverse transcription due to APOBEC-induced mutations that initiate a DNA base repair pathway and compromise the structural integrity of the ssDNA. In the absence of Vif, the virion is morphologically abnormal.</text>
</comment>
<comment type="miscellaneous">
    <text evidence="2">HIV-1 lineages are divided in three main groups, M (for Major), O (for Outlier), and N (for New, or Non-M, Non-O). The vast majority of strains found worldwide belong to the group M. Group O seems to be endemic to and largely confined to Cameroon and neighboring countries in West Central Africa, where these viruses represent a small minority of HIV-1 strains. The group N is represented by a limited number of isolates from Cameroonian persons. The group M is further subdivided in 9 clades or subtypes (A to D, F to H, J and K).</text>
</comment>
<comment type="miscellaneous">
    <text evidence="2">Required for replication in 'nonpermissive' cells, including primary T-cells, macrophages and certain T-cell lines, but is dispensable for replication in 'permissive' cell lines, such as 293T cells. In nonpermissive cells, Vif-defective viruses can produce virions, but they fail to complete reverse transcription and cannot successfully infect new cells.</text>
</comment>
<comment type="similarity">
    <text evidence="2">Belongs to the primate lentivirus group Vif protein family.</text>
</comment>
<evidence type="ECO:0000250" key="1">
    <source>
        <dbReference type="UniProtKB" id="O70897"/>
    </source>
</evidence>
<evidence type="ECO:0000255" key="2">
    <source>
        <dbReference type="HAMAP-Rule" id="MF_04081"/>
    </source>
</evidence>
<evidence type="ECO:0000256" key="3">
    <source>
        <dbReference type="SAM" id="MobiDB-lite"/>
    </source>
</evidence>
<organismHost>
    <name type="scientific">Homo sapiens</name>
    <name type="common">Human</name>
    <dbReference type="NCBI Taxonomy" id="9606"/>
</organismHost>
<keyword id="KW-0014">AIDS</keyword>
<keyword id="KW-1032">Host cell membrane</keyword>
<keyword id="KW-1035">Host cytoplasm</keyword>
<keyword id="KW-1043">Host membrane</keyword>
<keyword id="KW-0945">Host-virus interaction</keyword>
<keyword id="KW-0472">Membrane</keyword>
<keyword id="KW-0479">Metal-binding</keyword>
<keyword id="KW-0597">Phosphoprotein</keyword>
<keyword id="KW-1185">Reference proteome</keyword>
<keyword id="KW-0694">RNA-binding</keyword>
<keyword id="KW-0832">Ubl conjugation</keyword>
<keyword id="KW-0833">Ubl conjugation pathway</keyword>
<keyword id="KW-0946">Virion</keyword>
<keyword id="KW-0862">Zinc</keyword>
<dbReference type="EMBL" id="X04415">
    <property type="protein sequence ID" value="CAA28013.1"/>
    <property type="molecule type" value="Genomic_RNA"/>
</dbReference>
<dbReference type="PIR" id="T01669">
    <property type="entry name" value="T01669"/>
</dbReference>
<dbReference type="SMR" id="P04599"/>
<dbReference type="Proteomes" id="UP000007696">
    <property type="component" value="Genome"/>
</dbReference>
<dbReference type="GO" id="GO:0030430">
    <property type="term" value="C:host cell cytoplasm"/>
    <property type="evidence" value="ECO:0007669"/>
    <property type="project" value="UniProtKB-SubCell"/>
</dbReference>
<dbReference type="GO" id="GO:0020002">
    <property type="term" value="C:host cell plasma membrane"/>
    <property type="evidence" value="ECO:0007669"/>
    <property type="project" value="UniProtKB-SubCell"/>
</dbReference>
<dbReference type="GO" id="GO:0016020">
    <property type="term" value="C:membrane"/>
    <property type="evidence" value="ECO:0007669"/>
    <property type="project" value="UniProtKB-UniRule"/>
</dbReference>
<dbReference type="GO" id="GO:0044423">
    <property type="term" value="C:virion component"/>
    <property type="evidence" value="ECO:0007669"/>
    <property type="project" value="UniProtKB-UniRule"/>
</dbReference>
<dbReference type="GO" id="GO:0046872">
    <property type="term" value="F:metal ion binding"/>
    <property type="evidence" value="ECO:0007669"/>
    <property type="project" value="UniProtKB-KW"/>
</dbReference>
<dbReference type="GO" id="GO:0003723">
    <property type="term" value="F:RNA binding"/>
    <property type="evidence" value="ECO:0007669"/>
    <property type="project" value="UniProtKB-UniRule"/>
</dbReference>
<dbReference type="GO" id="GO:0019058">
    <property type="term" value="P:viral life cycle"/>
    <property type="evidence" value="ECO:0007669"/>
    <property type="project" value="InterPro"/>
</dbReference>
<dbReference type="HAMAP" id="MF_04081">
    <property type="entry name" value="HIV_VIF"/>
    <property type="match status" value="1"/>
</dbReference>
<dbReference type="InterPro" id="IPR000475">
    <property type="entry name" value="Vif"/>
</dbReference>
<dbReference type="Pfam" id="PF00559">
    <property type="entry name" value="Vif"/>
    <property type="match status" value="1"/>
</dbReference>
<dbReference type="PRINTS" id="PR00349">
    <property type="entry name" value="VIRIONINFFCT"/>
</dbReference>
<organism>
    <name type="scientific">Human immunodeficiency virus type 1 group M subtype A (isolate MAL)</name>
    <name type="common">HIV-1</name>
    <dbReference type="NCBI Taxonomy" id="11697"/>
    <lineage>
        <taxon>Viruses</taxon>
        <taxon>Riboviria</taxon>
        <taxon>Pararnavirae</taxon>
        <taxon>Artverviricota</taxon>
        <taxon>Revtraviricetes</taxon>
        <taxon>Ortervirales</taxon>
        <taxon>Retroviridae</taxon>
        <taxon>Orthoretrovirinae</taxon>
        <taxon>Lentivirus</taxon>
        <taxon>Human immunodeficiency virus type 1</taxon>
    </lineage>
</organism>